<feature type="chain" id="PRO_0000155382" description="Probable thymidylate kinase">
    <location>
        <begin position="1"/>
        <end position="196"/>
    </location>
</feature>
<feature type="binding site" evidence="1">
    <location>
        <begin position="7"/>
        <end position="14"/>
    </location>
    <ligand>
        <name>ATP</name>
        <dbReference type="ChEBI" id="CHEBI:30616"/>
    </ligand>
</feature>
<dbReference type="EC" id="2.7.4.9"/>
<dbReference type="EMBL" id="AE000782">
    <property type="protein sequence ID" value="AAB91163.1"/>
    <property type="molecule type" value="Genomic_DNA"/>
</dbReference>
<dbReference type="PIR" id="E69257">
    <property type="entry name" value="E69257"/>
</dbReference>
<dbReference type="RefSeq" id="WP_010877575.1">
    <property type="nucleotide sequence ID" value="NC_000917.1"/>
</dbReference>
<dbReference type="SMR" id="O30175"/>
<dbReference type="STRING" id="224325.AF_0061"/>
<dbReference type="PaxDb" id="224325-AF_0061"/>
<dbReference type="EnsemblBacteria" id="AAB91163">
    <property type="protein sequence ID" value="AAB91163"/>
    <property type="gene ID" value="AF_0061"/>
</dbReference>
<dbReference type="GeneID" id="1483270"/>
<dbReference type="KEGG" id="afu:AF_0061"/>
<dbReference type="eggNOG" id="arCOG01891">
    <property type="taxonomic scope" value="Archaea"/>
</dbReference>
<dbReference type="HOGENOM" id="CLU_049131_0_2_2"/>
<dbReference type="OrthoDB" id="43083at2157"/>
<dbReference type="PhylomeDB" id="O30175"/>
<dbReference type="Proteomes" id="UP000002199">
    <property type="component" value="Chromosome"/>
</dbReference>
<dbReference type="GO" id="GO:0005737">
    <property type="term" value="C:cytoplasm"/>
    <property type="evidence" value="ECO:0007669"/>
    <property type="project" value="TreeGrafter"/>
</dbReference>
<dbReference type="GO" id="GO:0005524">
    <property type="term" value="F:ATP binding"/>
    <property type="evidence" value="ECO:0007669"/>
    <property type="project" value="UniProtKB-UniRule"/>
</dbReference>
<dbReference type="GO" id="GO:0004798">
    <property type="term" value="F:dTMP kinase activity"/>
    <property type="evidence" value="ECO:0007669"/>
    <property type="project" value="UniProtKB-UniRule"/>
</dbReference>
<dbReference type="GO" id="GO:0006233">
    <property type="term" value="P:dTDP biosynthetic process"/>
    <property type="evidence" value="ECO:0007669"/>
    <property type="project" value="InterPro"/>
</dbReference>
<dbReference type="GO" id="GO:0006235">
    <property type="term" value="P:dTTP biosynthetic process"/>
    <property type="evidence" value="ECO:0007669"/>
    <property type="project" value="UniProtKB-UniRule"/>
</dbReference>
<dbReference type="GO" id="GO:0006227">
    <property type="term" value="P:dUDP biosynthetic process"/>
    <property type="evidence" value="ECO:0007669"/>
    <property type="project" value="TreeGrafter"/>
</dbReference>
<dbReference type="CDD" id="cd01672">
    <property type="entry name" value="TMPK"/>
    <property type="match status" value="1"/>
</dbReference>
<dbReference type="Gene3D" id="3.40.50.300">
    <property type="entry name" value="P-loop containing nucleotide triphosphate hydrolases"/>
    <property type="match status" value="1"/>
</dbReference>
<dbReference type="HAMAP" id="MF_00165">
    <property type="entry name" value="Thymidylate_kinase"/>
    <property type="match status" value="1"/>
</dbReference>
<dbReference type="InterPro" id="IPR027417">
    <property type="entry name" value="P-loop_NTPase"/>
</dbReference>
<dbReference type="InterPro" id="IPR039430">
    <property type="entry name" value="Thymidylate_kin-like_dom"/>
</dbReference>
<dbReference type="InterPro" id="IPR018095">
    <property type="entry name" value="Thymidylate_kin_CS"/>
</dbReference>
<dbReference type="InterPro" id="IPR018094">
    <property type="entry name" value="Thymidylate_kinase"/>
</dbReference>
<dbReference type="NCBIfam" id="TIGR00041">
    <property type="entry name" value="DTMP_kinase"/>
    <property type="match status" value="1"/>
</dbReference>
<dbReference type="PANTHER" id="PTHR10344">
    <property type="entry name" value="THYMIDYLATE KINASE"/>
    <property type="match status" value="1"/>
</dbReference>
<dbReference type="PANTHER" id="PTHR10344:SF4">
    <property type="entry name" value="UMP-CMP KINASE 2, MITOCHONDRIAL"/>
    <property type="match status" value="1"/>
</dbReference>
<dbReference type="Pfam" id="PF02223">
    <property type="entry name" value="Thymidylate_kin"/>
    <property type="match status" value="1"/>
</dbReference>
<dbReference type="SUPFAM" id="SSF52540">
    <property type="entry name" value="P-loop containing nucleoside triphosphate hydrolases"/>
    <property type="match status" value="1"/>
</dbReference>
<dbReference type="PROSITE" id="PS01331">
    <property type="entry name" value="THYMIDYLATE_KINASE"/>
    <property type="match status" value="1"/>
</dbReference>
<keyword id="KW-0067">ATP-binding</keyword>
<keyword id="KW-0418">Kinase</keyword>
<keyword id="KW-0545">Nucleotide biosynthesis</keyword>
<keyword id="KW-0547">Nucleotide-binding</keyword>
<keyword id="KW-1185">Reference proteome</keyword>
<keyword id="KW-0808">Transferase</keyword>
<organism>
    <name type="scientific">Archaeoglobus fulgidus (strain ATCC 49558 / DSM 4304 / JCM 9628 / NBRC 100126 / VC-16)</name>
    <dbReference type="NCBI Taxonomy" id="224325"/>
    <lineage>
        <taxon>Archaea</taxon>
        <taxon>Methanobacteriati</taxon>
        <taxon>Methanobacteriota</taxon>
        <taxon>Archaeoglobi</taxon>
        <taxon>Archaeoglobales</taxon>
        <taxon>Archaeoglobaceae</taxon>
        <taxon>Archaeoglobus</taxon>
    </lineage>
</organism>
<name>KTHY_ARCFU</name>
<reference key="1">
    <citation type="journal article" date="1997" name="Nature">
        <title>The complete genome sequence of the hyperthermophilic, sulphate-reducing archaeon Archaeoglobus fulgidus.</title>
        <authorList>
            <person name="Klenk H.-P."/>
            <person name="Clayton R.A."/>
            <person name="Tomb J.-F."/>
            <person name="White O."/>
            <person name="Nelson K.E."/>
            <person name="Ketchum K.A."/>
            <person name="Dodson R.J."/>
            <person name="Gwinn M.L."/>
            <person name="Hickey E.K."/>
            <person name="Peterson J.D."/>
            <person name="Richardson D.L."/>
            <person name="Kerlavage A.R."/>
            <person name="Graham D.E."/>
            <person name="Kyrpides N.C."/>
            <person name="Fleischmann R.D."/>
            <person name="Quackenbush J."/>
            <person name="Lee N.H."/>
            <person name="Sutton G.G."/>
            <person name="Gill S.R."/>
            <person name="Kirkness E.F."/>
            <person name="Dougherty B.A."/>
            <person name="McKenney K."/>
            <person name="Adams M.D."/>
            <person name="Loftus B.J."/>
            <person name="Peterson S.N."/>
            <person name="Reich C.I."/>
            <person name="McNeil L.K."/>
            <person name="Badger J.H."/>
            <person name="Glodek A."/>
            <person name="Zhou L."/>
            <person name="Overbeek R."/>
            <person name="Gocayne J.D."/>
            <person name="Weidman J.F."/>
            <person name="McDonald L.A."/>
            <person name="Utterback T.R."/>
            <person name="Cotton M.D."/>
            <person name="Spriggs T."/>
            <person name="Artiach P."/>
            <person name="Kaine B.P."/>
            <person name="Sykes S.M."/>
            <person name="Sadow P.W."/>
            <person name="D'Andrea K.P."/>
            <person name="Bowman C."/>
            <person name="Fujii C."/>
            <person name="Garland S.A."/>
            <person name="Mason T.M."/>
            <person name="Olsen G.J."/>
            <person name="Fraser C.M."/>
            <person name="Smith H.O."/>
            <person name="Woese C.R."/>
            <person name="Venter J.C."/>
        </authorList>
    </citation>
    <scope>NUCLEOTIDE SEQUENCE [LARGE SCALE GENOMIC DNA]</scope>
    <source>
        <strain>ATCC 49558 / DSM 4304 / JCM 9628 / NBRC 100126 / VC-16</strain>
    </source>
</reference>
<evidence type="ECO:0000255" key="1"/>
<evidence type="ECO:0000305" key="2"/>
<proteinExistence type="inferred from homology"/>
<gene>
    <name type="primary">tmk</name>
    <name type="ordered locus">AF_0061</name>
</gene>
<sequence>MLIAVEGIDGAGKTTIAAYIAELLKEKGYKVKVLKEPGDSKFGKKIKSSEERLSPEEELELFLKDREIDARENILPALQSGYAVVMDRYYFSNIAYQSARGIDARLIREMNEKIAPKPDLTILLDVEPEIALERVRKRGKLSPFEKLDYLRKVRKCFLENADETTVVVDASKPLEEVKEEVRKVIESFLNLKKNSN</sequence>
<protein>
    <recommendedName>
        <fullName>Probable thymidylate kinase</fullName>
        <ecNumber>2.7.4.9</ecNumber>
    </recommendedName>
    <alternativeName>
        <fullName>dTMP kinase</fullName>
    </alternativeName>
</protein>
<accession>O30175</accession>
<comment type="catalytic activity">
    <reaction>
        <text>dTMP + ATP = dTDP + ADP</text>
        <dbReference type="Rhea" id="RHEA:13517"/>
        <dbReference type="ChEBI" id="CHEBI:30616"/>
        <dbReference type="ChEBI" id="CHEBI:58369"/>
        <dbReference type="ChEBI" id="CHEBI:63528"/>
        <dbReference type="ChEBI" id="CHEBI:456216"/>
        <dbReference type="EC" id="2.7.4.9"/>
    </reaction>
</comment>
<comment type="similarity">
    <text evidence="2">Belongs to the thymidylate kinase family.</text>
</comment>